<reference key="1">
    <citation type="journal article" date="2006" name="Mol. Biol. Evol.">
        <title>The chloroplast genome sequence of Chara vulgaris sheds new light into the closest green algal relatives of land plants.</title>
        <authorList>
            <person name="Turmel M."/>
            <person name="Otis C."/>
            <person name="Lemieux C."/>
        </authorList>
    </citation>
    <scope>NUCLEOTIDE SEQUENCE [LARGE SCALE GENOMIC DNA]</scope>
</reference>
<feature type="signal peptide" evidence="2">
    <location>
        <begin position="1"/>
        <end position="35"/>
    </location>
</feature>
<feature type="chain" id="PRO_0000275401" description="Cytochrome f">
    <location>
        <begin position="36"/>
        <end position="321"/>
    </location>
</feature>
<feature type="transmembrane region" description="Helical" evidence="2">
    <location>
        <begin position="287"/>
        <end position="307"/>
    </location>
</feature>
<feature type="binding site" description="axial binding residue" evidence="2">
    <location>
        <position position="38"/>
    </location>
    <ligand>
        <name>heme</name>
        <dbReference type="ChEBI" id="CHEBI:30413"/>
    </ligand>
    <ligandPart>
        <name>Fe</name>
        <dbReference type="ChEBI" id="CHEBI:18248"/>
    </ligandPart>
</feature>
<feature type="binding site" description="covalent" evidence="2">
    <location>
        <position position="58"/>
    </location>
    <ligand>
        <name>heme</name>
        <dbReference type="ChEBI" id="CHEBI:30413"/>
    </ligand>
</feature>
<feature type="binding site" description="covalent" evidence="2">
    <location>
        <position position="61"/>
    </location>
    <ligand>
        <name>heme</name>
        <dbReference type="ChEBI" id="CHEBI:30413"/>
    </ligand>
</feature>
<feature type="binding site" description="axial binding residue" evidence="2">
    <location>
        <position position="62"/>
    </location>
    <ligand>
        <name>heme</name>
        <dbReference type="ChEBI" id="CHEBI:30413"/>
    </ligand>
    <ligandPart>
        <name>Fe</name>
        <dbReference type="ChEBI" id="CHEBI:18248"/>
    </ligandPart>
</feature>
<proteinExistence type="inferred from homology"/>
<evidence type="ECO:0000250" key="1"/>
<evidence type="ECO:0000255" key="2">
    <source>
        <dbReference type="HAMAP-Rule" id="MF_00610"/>
    </source>
</evidence>
<organism>
    <name type="scientific">Chara vulgaris</name>
    <name type="common">Common stonewort</name>
    <dbReference type="NCBI Taxonomy" id="55564"/>
    <lineage>
        <taxon>Eukaryota</taxon>
        <taxon>Viridiplantae</taxon>
        <taxon>Streptophyta</taxon>
        <taxon>Charophyceae</taxon>
        <taxon>Charales</taxon>
        <taxon>Characeae</taxon>
        <taxon>Chara</taxon>
    </lineage>
</organism>
<name>CYF_CHAVU</name>
<comment type="function">
    <text evidence="2">Component of the cytochrome b6-f complex, which mediates electron transfer between photosystem II (PSII) and photosystem I (PSI), cyclic electron flow around PSI, and state transitions.</text>
</comment>
<comment type="cofactor">
    <cofactor evidence="2">
        <name>heme</name>
        <dbReference type="ChEBI" id="CHEBI:30413"/>
    </cofactor>
    <text evidence="2">Binds 1 heme group covalently.</text>
</comment>
<comment type="subunit">
    <text evidence="1">The 4 large subunits of the cytochrome b6-f complex are cytochrome b6, subunit IV (17 kDa polypeptide, petD), cytochrome f and the Rieske protein, while the 4 small subunits are PetG, PetL, PetM and PetN. The complex functions as a dimer (By similarity).</text>
</comment>
<comment type="subcellular location">
    <subcellularLocation>
        <location evidence="2">Plastid</location>
        <location evidence="2">Chloroplast thylakoid membrane</location>
        <topology evidence="2">Single-pass membrane protein</topology>
    </subcellularLocation>
</comment>
<comment type="similarity">
    <text evidence="2">Belongs to the cytochrome f family.</text>
</comment>
<protein>
    <recommendedName>
        <fullName evidence="2">Cytochrome f</fullName>
    </recommendedName>
</protein>
<accession>Q1ACM5</accession>
<sequence length="321" mass="35616">MQNTNTLNWINKLIYLSISIPIFFLILVTTYPNSVEAYPVFAQQAYKSPREATGRIVCANCHLAKKTVDIEVPQAVLPNTVFEAVVKIPYDMQLKQVLANGKKGNLNVAAVLILPEGFELAPPDRISPDIKEKIGNLSFQSYSPDQKNILVVGPVPGKKYSEITFPILSPDPSINKQTNFLKYPIYVGGNRGRGQIYLDGSKSNNTIYSSSAEGQVVKIIRKEKGGYEIFIDTIDGRKITDIIPPGPEIIVSEGEFVKVDQPLTNNPNVGGFGQANTEIVLQNPLRMEGLILFFISVILAQVFLVLKKKQFEKVQIAEMNF</sequence>
<keyword id="KW-0150">Chloroplast</keyword>
<keyword id="KW-0249">Electron transport</keyword>
<keyword id="KW-0349">Heme</keyword>
<keyword id="KW-0408">Iron</keyword>
<keyword id="KW-0472">Membrane</keyword>
<keyword id="KW-0479">Metal-binding</keyword>
<keyword id="KW-0602">Photosynthesis</keyword>
<keyword id="KW-0934">Plastid</keyword>
<keyword id="KW-0732">Signal</keyword>
<keyword id="KW-0793">Thylakoid</keyword>
<keyword id="KW-0812">Transmembrane</keyword>
<keyword id="KW-1133">Transmembrane helix</keyword>
<keyword id="KW-0813">Transport</keyword>
<dbReference type="EMBL" id="DQ229107">
    <property type="protein sequence ID" value="ABA61919.1"/>
    <property type="molecule type" value="Genomic_DNA"/>
</dbReference>
<dbReference type="RefSeq" id="YP_635722.1">
    <property type="nucleotide sequence ID" value="NC_008097.1"/>
</dbReference>
<dbReference type="SMR" id="Q1ACM5"/>
<dbReference type="GeneID" id="4100289"/>
<dbReference type="GO" id="GO:0009535">
    <property type="term" value="C:chloroplast thylakoid membrane"/>
    <property type="evidence" value="ECO:0007669"/>
    <property type="project" value="UniProtKB-SubCell"/>
</dbReference>
<dbReference type="GO" id="GO:0009055">
    <property type="term" value="F:electron transfer activity"/>
    <property type="evidence" value="ECO:0007669"/>
    <property type="project" value="UniProtKB-UniRule"/>
</dbReference>
<dbReference type="GO" id="GO:0020037">
    <property type="term" value="F:heme binding"/>
    <property type="evidence" value="ECO:0007669"/>
    <property type="project" value="InterPro"/>
</dbReference>
<dbReference type="GO" id="GO:0005506">
    <property type="term" value="F:iron ion binding"/>
    <property type="evidence" value="ECO:0007669"/>
    <property type="project" value="InterPro"/>
</dbReference>
<dbReference type="GO" id="GO:0015979">
    <property type="term" value="P:photosynthesis"/>
    <property type="evidence" value="ECO:0007669"/>
    <property type="project" value="UniProtKB-UniRule"/>
</dbReference>
<dbReference type="FunFam" id="1.20.5.700:FF:000001">
    <property type="entry name" value="Cytochrome f"/>
    <property type="match status" value="1"/>
</dbReference>
<dbReference type="FunFam" id="2.40.50.100:FF:000007">
    <property type="entry name" value="Cytochrome f"/>
    <property type="match status" value="1"/>
</dbReference>
<dbReference type="FunFam" id="2.60.40.830:FF:000001">
    <property type="entry name" value="Cytochrome f"/>
    <property type="match status" value="1"/>
</dbReference>
<dbReference type="Gene3D" id="2.40.50.100">
    <property type="match status" value="1"/>
</dbReference>
<dbReference type="Gene3D" id="2.60.40.830">
    <property type="entry name" value="Cytochrome f large domain"/>
    <property type="match status" value="1"/>
</dbReference>
<dbReference type="Gene3D" id="1.20.5.700">
    <property type="entry name" value="Single helix bin"/>
    <property type="match status" value="1"/>
</dbReference>
<dbReference type="HAMAP" id="MF_00610">
    <property type="entry name" value="Cytb6_f_cytF"/>
    <property type="match status" value="1"/>
</dbReference>
<dbReference type="InterPro" id="IPR024058">
    <property type="entry name" value="Cyt-f_TM"/>
</dbReference>
<dbReference type="InterPro" id="IPR002325">
    <property type="entry name" value="Cyt_f"/>
</dbReference>
<dbReference type="InterPro" id="IPR024094">
    <property type="entry name" value="Cyt_f_lg_dom"/>
</dbReference>
<dbReference type="InterPro" id="IPR036826">
    <property type="entry name" value="Cyt_f_lg_dom_sf"/>
</dbReference>
<dbReference type="InterPro" id="IPR011054">
    <property type="entry name" value="Rudment_hybrid_motif"/>
</dbReference>
<dbReference type="PANTHER" id="PTHR33288">
    <property type="match status" value="1"/>
</dbReference>
<dbReference type="PANTHER" id="PTHR33288:SF10">
    <property type="entry name" value="CYTOCHROME F"/>
    <property type="match status" value="1"/>
</dbReference>
<dbReference type="Pfam" id="PF01333">
    <property type="entry name" value="Apocytochr_F_C"/>
    <property type="match status" value="1"/>
</dbReference>
<dbReference type="Pfam" id="PF16639">
    <property type="entry name" value="Apocytochr_F_N"/>
    <property type="match status" value="1"/>
</dbReference>
<dbReference type="PRINTS" id="PR00610">
    <property type="entry name" value="CYTOCHROMEF"/>
</dbReference>
<dbReference type="SUPFAM" id="SSF103431">
    <property type="entry name" value="Cytochrome f subunit of the cytochrome b6f complex, transmembrane anchor"/>
    <property type="match status" value="1"/>
</dbReference>
<dbReference type="SUPFAM" id="SSF49441">
    <property type="entry name" value="Cytochrome f, large domain"/>
    <property type="match status" value="1"/>
</dbReference>
<dbReference type="SUPFAM" id="SSF51246">
    <property type="entry name" value="Rudiment single hybrid motif"/>
    <property type="match status" value="1"/>
</dbReference>
<dbReference type="PROSITE" id="PS51010">
    <property type="entry name" value="CYTF"/>
    <property type="match status" value="1"/>
</dbReference>
<gene>
    <name evidence="2" type="primary">petA</name>
</gene>
<geneLocation type="chloroplast"/>